<comment type="function">
    <text evidence="1">Mitochondrial GTPase that mediates the disassembly of ribosomes from messenger RNA at the termination of mitochondrial protein biosynthesis. Not involved in the GTP-dependent ribosomal translocation step during translation elongation.</text>
</comment>
<comment type="subcellular location">
    <subcellularLocation>
        <location evidence="1">Mitochondrion</location>
    </subcellularLocation>
</comment>
<comment type="similarity">
    <text evidence="1">Belongs to the TRAFAC class translation factor GTPase superfamily. Classic translation factor GTPase family. EF-G/EF-2 subfamily.</text>
</comment>
<comment type="sequence caution" evidence="2">
    <conflict type="erroneous initiation">
        <sequence resource="EMBL-CDS" id="AOW26352"/>
    </conflict>
    <text>Truncated N-terminus.</text>
</comment>
<sequence length="807" mass="90224">MFCRKYVFQTWKQLSRSYSTVNSIGAAKTRNIGIIAHIDAGKTTTTERMIYYSGRTKRIGNVDEGDTVTDYLPSERERGITIQSAAITLPWNQHKINIIDTPGHADFTFEVIRSLRVLDGAVTILDAVAGVEAQTEKVWKQASALNLPKVVYVNKMDRPGAGFSRTVQEVIQKLETRVVLCNLPYFETNKESDLEFKGVIDVIHQKLLKWNETDANGNEISVVNIDETTPDLLQILEKSRESMVETLGEYDERIIDSFLEHDENYLKIPPMLLDQVIRKATIDNYLTPVFCGASFRNIGVQPLMDGITKYLPSPLETSLPQITKNGKDVTKKVDGEKGLVVANDNNLTLALAFKVMTHSTRGPMTFVRVYSGKLNAASNLINTRTGKKLLIRKLLVMHGDSPEEVKSISAGNIGVIPGYETDFQTGDTLVSSAVAKRNFTAKDSAYRLLPIDIPPPLFNAAIEPHTAGDEAYMKQCVETLIREDPSLKVHLDKEMGQVVLSGMGELHLDIVRERLVNDMKAKVNLKDVVVSYKESFVGKREKEAVITNEEIEVAVTLSHIEDARDYVGQEGALVIEEDNNVILLSETASSEHVRATIDERRWKCENNLEELKEAILNGCLTALQMGGPILGFPLHSTLVTVNRWNVPVEVAQEQALNLMNASRQAVQSLKDEKKDFSILEPIMSTKVYVDSNDLGEVSHDLTQRCKAMIVEIQDQSTQNLETAAWAKDEAAKVYVPPDYTIKKNVSKFDDIANKKIIVAETPLREMIGYLSKLRALTRGRATFDMTLIGMRRAVGNRVDSIVEEYKF</sequence>
<organism>
    <name type="scientific">Candida albicans (strain SC5314 / ATCC MYA-2876)</name>
    <name type="common">Yeast</name>
    <dbReference type="NCBI Taxonomy" id="237561"/>
    <lineage>
        <taxon>Eukaryota</taxon>
        <taxon>Fungi</taxon>
        <taxon>Dikarya</taxon>
        <taxon>Ascomycota</taxon>
        <taxon>Saccharomycotina</taxon>
        <taxon>Pichiomycetes</taxon>
        <taxon>Debaryomycetaceae</taxon>
        <taxon>Candida/Lodderomyces clade</taxon>
        <taxon>Candida</taxon>
    </lineage>
</organism>
<name>RRF2M_CANAL</name>
<protein>
    <recommendedName>
        <fullName evidence="1">Ribosome-releasing factor 2, mitochondrial</fullName>
        <shortName evidence="1">RRF2mt</shortName>
    </recommendedName>
    <alternativeName>
        <fullName evidence="1">Elongation factor G 2, mitochondrial</fullName>
        <shortName evidence="1">EF-G2mt</shortName>
        <shortName evidence="1">mEF-G 2</shortName>
    </alternativeName>
</protein>
<dbReference type="EMBL" id="CP017623">
    <property type="protein sequence ID" value="AOW26352.1"/>
    <property type="status" value="ALT_INIT"/>
    <property type="molecule type" value="Genomic_DNA"/>
</dbReference>
<dbReference type="RefSeq" id="XP_718798.2">
    <property type="nucleotide sequence ID" value="XM_713705.2"/>
</dbReference>
<dbReference type="SMR" id="Q5AAV3"/>
<dbReference type="FunCoup" id="Q5AAV3">
    <property type="interactions" value="611"/>
</dbReference>
<dbReference type="STRING" id="237561.Q5AAV3"/>
<dbReference type="GeneID" id="3639564"/>
<dbReference type="KEGG" id="cal:CAALFM_C107000WA"/>
<dbReference type="eggNOG" id="KOG0465">
    <property type="taxonomic scope" value="Eukaryota"/>
</dbReference>
<dbReference type="HOGENOM" id="CLU_002794_4_1_1"/>
<dbReference type="InParanoid" id="Q5AAV3"/>
<dbReference type="OrthoDB" id="198619at2759"/>
<dbReference type="PRO" id="PR:Q5AAV3"/>
<dbReference type="Proteomes" id="UP000000559">
    <property type="component" value="Chromosome 1"/>
</dbReference>
<dbReference type="GO" id="GO:0005739">
    <property type="term" value="C:mitochondrion"/>
    <property type="evidence" value="ECO:0007669"/>
    <property type="project" value="UniProtKB-SubCell"/>
</dbReference>
<dbReference type="GO" id="GO:0005525">
    <property type="term" value="F:GTP binding"/>
    <property type="evidence" value="ECO:0007669"/>
    <property type="project" value="UniProtKB-UniRule"/>
</dbReference>
<dbReference type="GO" id="GO:0003924">
    <property type="term" value="F:GTPase activity"/>
    <property type="evidence" value="ECO:0000318"/>
    <property type="project" value="GO_Central"/>
</dbReference>
<dbReference type="GO" id="GO:0032543">
    <property type="term" value="P:mitochondrial translation"/>
    <property type="evidence" value="ECO:0000318"/>
    <property type="project" value="GO_Central"/>
</dbReference>
<dbReference type="GO" id="GO:0032790">
    <property type="term" value="P:ribosome disassembly"/>
    <property type="evidence" value="ECO:0000318"/>
    <property type="project" value="GO_Central"/>
</dbReference>
<dbReference type="CDD" id="cd01886">
    <property type="entry name" value="EF-G"/>
    <property type="match status" value="1"/>
</dbReference>
<dbReference type="CDD" id="cd16262">
    <property type="entry name" value="EFG_III"/>
    <property type="match status" value="1"/>
</dbReference>
<dbReference type="CDD" id="cd03713">
    <property type="entry name" value="EFG_mtEFG_C"/>
    <property type="match status" value="1"/>
</dbReference>
<dbReference type="CDD" id="cd04092">
    <property type="entry name" value="mtEFG2_II_like"/>
    <property type="match status" value="1"/>
</dbReference>
<dbReference type="FunFam" id="3.40.50.300:FF:001636">
    <property type="entry name" value="Ribosome-releasing factor 2, mitochondrial"/>
    <property type="match status" value="1"/>
</dbReference>
<dbReference type="Gene3D" id="3.30.70.240">
    <property type="match status" value="1"/>
</dbReference>
<dbReference type="Gene3D" id="3.30.70.870">
    <property type="entry name" value="Elongation Factor G (Translational Gtpase), domain 3"/>
    <property type="match status" value="1"/>
</dbReference>
<dbReference type="Gene3D" id="3.40.50.300">
    <property type="entry name" value="P-loop containing nucleotide triphosphate hydrolases"/>
    <property type="match status" value="1"/>
</dbReference>
<dbReference type="Gene3D" id="2.40.30.10">
    <property type="entry name" value="Translation factors"/>
    <property type="match status" value="1"/>
</dbReference>
<dbReference type="HAMAP" id="MF_03059">
    <property type="entry name" value="mEF_G_2"/>
    <property type="match status" value="1"/>
</dbReference>
<dbReference type="InterPro" id="IPR053905">
    <property type="entry name" value="EF-G-like_DII"/>
</dbReference>
<dbReference type="InterPro" id="IPR030851">
    <property type="entry name" value="EFG2"/>
</dbReference>
<dbReference type="InterPro" id="IPR041095">
    <property type="entry name" value="EFG_II"/>
</dbReference>
<dbReference type="InterPro" id="IPR009022">
    <property type="entry name" value="EFG_III"/>
</dbReference>
<dbReference type="InterPro" id="IPR035647">
    <property type="entry name" value="EFG_III/V"/>
</dbReference>
<dbReference type="InterPro" id="IPR035649">
    <property type="entry name" value="EFG_V"/>
</dbReference>
<dbReference type="InterPro" id="IPR000640">
    <property type="entry name" value="EFG_V-like"/>
</dbReference>
<dbReference type="InterPro" id="IPR031157">
    <property type="entry name" value="G_TR_CS"/>
</dbReference>
<dbReference type="InterPro" id="IPR027417">
    <property type="entry name" value="P-loop_NTPase"/>
</dbReference>
<dbReference type="InterPro" id="IPR005225">
    <property type="entry name" value="Small_GTP-bd"/>
</dbReference>
<dbReference type="InterPro" id="IPR000795">
    <property type="entry name" value="T_Tr_GTP-bd_dom"/>
</dbReference>
<dbReference type="InterPro" id="IPR009000">
    <property type="entry name" value="Transl_B-barrel_sf"/>
</dbReference>
<dbReference type="NCBIfam" id="TIGR00231">
    <property type="entry name" value="small_GTP"/>
    <property type="match status" value="1"/>
</dbReference>
<dbReference type="PANTHER" id="PTHR43261:SF1">
    <property type="entry name" value="RIBOSOME-RELEASING FACTOR 2, MITOCHONDRIAL"/>
    <property type="match status" value="1"/>
</dbReference>
<dbReference type="PANTHER" id="PTHR43261">
    <property type="entry name" value="TRANSLATION ELONGATION FACTOR G-RELATED"/>
    <property type="match status" value="1"/>
</dbReference>
<dbReference type="Pfam" id="PF22042">
    <property type="entry name" value="EF-G_D2"/>
    <property type="match status" value="1"/>
</dbReference>
<dbReference type="Pfam" id="PF00679">
    <property type="entry name" value="EFG_C"/>
    <property type="match status" value="1"/>
</dbReference>
<dbReference type="Pfam" id="PF14492">
    <property type="entry name" value="EFG_III"/>
    <property type="match status" value="1"/>
</dbReference>
<dbReference type="Pfam" id="PF00009">
    <property type="entry name" value="GTP_EFTU"/>
    <property type="match status" value="1"/>
</dbReference>
<dbReference type="PRINTS" id="PR00315">
    <property type="entry name" value="ELONGATNFCT"/>
</dbReference>
<dbReference type="SMART" id="SM00838">
    <property type="entry name" value="EFG_C"/>
    <property type="match status" value="1"/>
</dbReference>
<dbReference type="SUPFAM" id="SSF54980">
    <property type="entry name" value="EF-G C-terminal domain-like"/>
    <property type="match status" value="2"/>
</dbReference>
<dbReference type="SUPFAM" id="SSF52540">
    <property type="entry name" value="P-loop containing nucleoside triphosphate hydrolases"/>
    <property type="match status" value="1"/>
</dbReference>
<dbReference type="SUPFAM" id="SSF50447">
    <property type="entry name" value="Translation proteins"/>
    <property type="match status" value="1"/>
</dbReference>
<dbReference type="PROSITE" id="PS00301">
    <property type="entry name" value="G_TR_1"/>
    <property type="match status" value="1"/>
</dbReference>
<dbReference type="PROSITE" id="PS51722">
    <property type="entry name" value="G_TR_2"/>
    <property type="match status" value="1"/>
</dbReference>
<proteinExistence type="inferred from homology"/>
<reference key="1">
    <citation type="journal article" date="2004" name="Proc. Natl. Acad. Sci. U.S.A.">
        <title>The diploid genome sequence of Candida albicans.</title>
        <authorList>
            <person name="Jones T."/>
            <person name="Federspiel N.A."/>
            <person name="Chibana H."/>
            <person name="Dungan J."/>
            <person name="Kalman S."/>
            <person name="Magee B.B."/>
            <person name="Newport G."/>
            <person name="Thorstenson Y.R."/>
            <person name="Agabian N."/>
            <person name="Magee P.T."/>
            <person name="Davis R.W."/>
            <person name="Scherer S."/>
        </authorList>
    </citation>
    <scope>NUCLEOTIDE SEQUENCE [LARGE SCALE GENOMIC DNA]</scope>
    <source>
        <strain>SC5314 / ATCC MYA-2876</strain>
    </source>
</reference>
<reference key="2">
    <citation type="journal article" date="2007" name="Genome Biol.">
        <title>Assembly of the Candida albicans genome into sixteen supercontigs aligned on the eight chromosomes.</title>
        <authorList>
            <person name="van het Hoog M."/>
            <person name="Rast T.J."/>
            <person name="Martchenko M."/>
            <person name="Grindle S."/>
            <person name="Dignard D."/>
            <person name="Hogues H."/>
            <person name="Cuomo C."/>
            <person name="Berriman M."/>
            <person name="Scherer S."/>
            <person name="Magee B.B."/>
            <person name="Whiteway M."/>
            <person name="Chibana H."/>
            <person name="Nantel A."/>
            <person name="Magee P.T."/>
        </authorList>
    </citation>
    <scope>GENOME REANNOTATION</scope>
    <source>
        <strain>SC5314 / ATCC MYA-2876</strain>
    </source>
</reference>
<reference key="3">
    <citation type="journal article" date="2013" name="Genome Biol.">
        <title>Assembly of a phased diploid Candida albicans genome facilitates allele-specific measurements and provides a simple model for repeat and indel structure.</title>
        <authorList>
            <person name="Muzzey D."/>
            <person name="Schwartz K."/>
            <person name="Weissman J.S."/>
            <person name="Sherlock G."/>
        </authorList>
    </citation>
    <scope>NUCLEOTIDE SEQUENCE [LARGE SCALE GENOMIC DNA]</scope>
    <scope>GENOME REANNOTATION</scope>
    <source>
        <strain>SC5314 / ATCC MYA-2876</strain>
    </source>
</reference>
<keyword id="KW-0342">GTP-binding</keyword>
<keyword id="KW-0496">Mitochondrion</keyword>
<keyword id="KW-0547">Nucleotide-binding</keyword>
<keyword id="KW-0648">Protein biosynthesis</keyword>
<keyword id="KW-1185">Reference proteome</keyword>
<keyword id="KW-0809">Transit peptide</keyword>
<feature type="transit peptide" description="Mitochondrion" evidence="1">
    <location>
        <begin position="1"/>
        <end position="18"/>
    </location>
</feature>
<feature type="chain" id="PRO_0000385611" description="Ribosome-releasing factor 2, mitochondrial">
    <location>
        <begin position="19"/>
        <end position="807"/>
    </location>
</feature>
<feature type="domain" description="tr-type G">
    <location>
        <begin position="27"/>
        <end position="315"/>
    </location>
</feature>
<feature type="binding site" evidence="1">
    <location>
        <begin position="36"/>
        <end position="43"/>
    </location>
    <ligand>
        <name>GTP</name>
        <dbReference type="ChEBI" id="CHEBI:37565"/>
    </ligand>
</feature>
<feature type="binding site" evidence="1">
    <location>
        <begin position="100"/>
        <end position="104"/>
    </location>
    <ligand>
        <name>GTP</name>
        <dbReference type="ChEBI" id="CHEBI:37565"/>
    </ligand>
</feature>
<feature type="binding site" evidence="1">
    <location>
        <begin position="154"/>
        <end position="157"/>
    </location>
    <ligand>
        <name>GTP</name>
        <dbReference type="ChEBI" id="CHEBI:37565"/>
    </ligand>
</feature>
<accession>Q5AAV3</accession>
<accession>A0A1D8PDY3</accession>
<accession>Q5AB43</accession>
<gene>
    <name evidence="1" type="primary">MEF2</name>
    <name type="ordered locus">CAALFM_C107000WA</name>
    <name type="ORF">CaO19.13589</name>
    <name type="ORF">CaO19.6208</name>
</gene>
<evidence type="ECO:0000255" key="1">
    <source>
        <dbReference type="HAMAP-Rule" id="MF_03059"/>
    </source>
</evidence>
<evidence type="ECO:0000305" key="2"/>